<feature type="chain" id="PRO_0000373267" description="Protein MGF 360-9L">
    <location>
        <begin position="1"/>
        <end position="125"/>
    </location>
</feature>
<comment type="function">
    <text evidence="1 3">Plays a role in virus cell tropism, and may be required for efficient virus replication in macrophages (PubMed:11238833). In addition, inhibits IFN-beta-induced IFN-stimulated genes (ISGs) transcription. Mechanistically, degrades host STAT1 and STAT2 through apoptosis and ubiquitin-proteasome pathways respectively (PubMed:35076286).</text>
</comment>
<comment type="subunit">
    <text evidence="3">Interacts with host STAT1; this interaction mediates STAT1 degradation through apoptosis (PubMed:35076286). Interacts with host STAT2; this interaction mediates STAT2 degradation through the proteasome (PubMed:35076286).</text>
</comment>
<comment type="subcellular location">
    <subcellularLocation>
        <location evidence="3">Host cytoplasm</location>
    </subcellularLocation>
</comment>
<comment type="induction">
    <text evidence="2">Expressed in the early phase of the viral replicative cycle.</text>
</comment>
<comment type="disruption phenotype">
    <text evidence="3">Deletion causes mild pathological injury in pigs compared with WT.</text>
</comment>
<comment type="similarity">
    <text evidence="4">Belongs to the asfivirus MGF 360 family.</text>
</comment>
<comment type="caution">
    <text evidence="4">A error in sequencing might explain the fact that the this protein is shorter than any other ASFV MGF360-9L proteins.</text>
</comment>
<dbReference type="EMBL" id="U18466">
    <property type="protein sequence ID" value="AAA65255.1"/>
    <property type="molecule type" value="Genomic_DNA"/>
</dbReference>
<dbReference type="RefSeq" id="NP_042719.1">
    <property type="nucleotide sequence ID" value="NC_001659.2"/>
</dbReference>
<dbReference type="GeneID" id="22220407"/>
<dbReference type="KEGG" id="vg:22220407"/>
<dbReference type="Proteomes" id="UP000000624">
    <property type="component" value="Segment"/>
</dbReference>
<dbReference type="GO" id="GO:0030430">
    <property type="term" value="C:host cell cytoplasm"/>
    <property type="evidence" value="ECO:0007669"/>
    <property type="project" value="UniProtKB-SubCell"/>
</dbReference>
<dbReference type="GO" id="GO:0052170">
    <property type="term" value="P:symbiont-mediated suppression of host innate immune response"/>
    <property type="evidence" value="ECO:0007669"/>
    <property type="project" value="UniProtKB-KW"/>
</dbReference>
<dbReference type="GO" id="GO:0039563">
    <property type="term" value="P:symbiont-mediated suppression of host JAK-STAT cascade via inhibition of STAT1 activity"/>
    <property type="evidence" value="ECO:0007669"/>
    <property type="project" value="UniProtKB-KW"/>
</dbReference>
<dbReference type="GO" id="GO:0039564">
    <property type="term" value="P:symbiont-mediated suppression of host JAK-STAT cascade via inhibition of STAT2 activity"/>
    <property type="evidence" value="ECO:0007669"/>
    <property type="project" value="UniProtKB-KW"/>
</dbReference>
<dbReference type="GO" id="GO:0039502">
    <property type="term" value="P:symbiont-mediated suppression of host type I interferon-mediated signaling pathway"/>
    <property type="evidence" value="ECO:0007669"/>
    <property type="project" value="UniProtKB-KW"/>
</dbReference>
<dbReference type="GO" id="GO:0042330">
    <property type="term" value="P:taxis"/>
    <property type="evidence" value="ECO:0007669"/>
    <property type="project" value="InterPro"/>
</dbReference>
<dbReference type="InterPro" id="IPR002595">
    <property type="entry name" value="ASFV_MGF360"/>
</dbReference>
<dbReference type="Pfam" id="PF01671">
    <property type="entry name" value="ASFV_360"/>
    <property type="match status" value="1"/>
</dbReference>
<accession>Q65137</accession>
<reference key="1">
    <citation type="journal article" date="1995" name="Virology">
        <title>Analysis of the complete nucleotide sequence of African swine fever virus.</title>
        <authorList>
            <person name="Yanez R.J."/>
            <person name="Rodriguez J.M."/>
            <person name="Nogal M.L."/>
            <person name="Yuste L."/>
            <person name="Enriquez C."/>
            <person name="Rodriguez J.F."/>
            <person name="Vinuela E."/>
        </authorList>
    </citation>
    <scope>NUCLEOTIDE SEQUENCE [LARGE SCALE GENOMIC DNA]</scope>
</reference>
<reference key="2">
    <citation type="journal article" date="2001" name="J. Virol.">
        <title>African swine fever virus multigene family 360 and 530 genes are novel macrophage host range determinants.</title>
        <authorList>
            <person name="Zsak L."/>
            <person name="Lu Z."/>
            <person name="Burrage T.G."/>
            <person name="Neilan J.G."/>
            <person name="Kutish G.F."/>
            <person name="Moore D.M."/>
            <person name="Rock D.L."/>
        </authorList>
    </citation>
    <scope>FUNCTION</scope>
</reference>
<reference key="3">
    <citation type="journal article" date="2020" name="J. Virol.">
        <title>The African Swine Fever Virus Transcriptome.</title>
        <authorList>
            <person name="Cackett G."/>
            <person name="Matelska D."/>
            <person name="Sykora M."/>
            <person name="Portugal R."/>
            <person name="Malecki M."/>
            <person name="Baehler J."/>
            <person name="Dixon L."/>
            <person name="Werner F."/>
        </authorList>
    </citation>
    <scope>INDUCTION</scope>
</reference>
<reference key="4">
    <citation type="journal article" date="2022" name="MBio">
        <title>MGF360-9L Is a Major Virulence Factor Associated with the African Swine Fever Virus by Antagonizing the JAK/STAT Signaling Pathway.</title>
        <authorList>
            <person name="Zhang K."/>
            <person name="Yang B."/>
            <person name="Shen C."/>
            <person name="Zhang T."/>
            <person name="Hao Y."/>
            <person name="Zhang D."/>
            <person name="Liu H."/>
            <person name="Shi X."/>
            <person name="Li G."/>
            <person name="Yang J."/>
            <person name="Li D."/>
            <person name="Zhu Z."/>
            <person name="Tian H."/>
            <person name="Yang F."/>
            <person name="Ru Y."/>
            <person name="Cao W.J."/>
            <person name="Guo J."/>
            <person name="He J."/>
            <person name="Zheng H."/>
            <person name="Liu X."/>
        </authorList>
    </citation>
    <scope>FUNCTION</scope>
    <scope>DISRUPTION PHENOTYPE</scope>
    <scope>INTERACTION WITH HOST STAT1 AND STAT2</scope>
    <scope>SUBCELLULAR LOCATION</scope>
    <source>
        <strain>CN/GS/2018</strain>
    </source>
</reference>
<keyword id="KW-0244">Early protein</keyword>
<keyword id="KW-1035">Host cytoplasm</keyword>
<keyword id="KW-0945">Host-virus interaction</keyword>
<keyword id="KW-1090">Inhibition of host innate immune response by virus</keyword>
<keyword id="KW-1114">Inhibition of host interferon signaling pathway by virus</keyword>
<keyword id="KW-1105">Inhibition of host STAT1 by virus</keyword>
<keyword id="KW-1106">Inhibition of host STAT2 by virus</keyword>
<keyword id="KW-0922">Interferon antiviral system evasion</keyword>
<keyword id="KW-1185">Reference proteome</keyword>
<keyword id="KW-0899">Viral immunoevasion</keyword>
<gene>
    <name type="ordered locus">BA71V-024</name>
    <name type="ORF">A125L</name>
</gene>
<proteinExistence type="evidence at protein level"/>
<sequence>MDMDEMLRWACRKNYNYLTIYYCCVALGADINQAMFHSIQFYNIGNIFFCIDLGANAFEEGKTLAHQKDNSFIASMLSLNCYSMNDSLSLKETDPEVIKRMLKDYHSKNLSIAHKHYINDGFNDI</sequence>
<organism>
    <name type="scientific">African swine fever virus (strain Badajoz 1971 Vero-adapted)</name>
    <name type="common">Ba71V</name>
    <name type="synonym">ASFV</name>
    <dbReference type="NCBI Taxonomy" id="10498"/>
    <lineage>
        <taxon>Viruses</taxon>
        <taxon>Varidnaviria</taxon>
        <taxon>Bamfordvirae</taxon>
        <taxon>Nucleocytoviricota</taxon>
        <taxon>Pokkesviricetes</taxon>
        <taxon>Asfuvirales</taxon>
        <taxon>Asfarviridae</taxon>
        <taxon>Asfivirus</taxon>
        <taxon>African swine fever virus</taxon>
    </lineage>
</organism>
<organismHost>
    <name type="scientific">Ornithodoros</name>
    <name type="common">relapsing fever ticks</name>
    <dbReference type="NCBI Taxonomy" id="6937"/>
</organismHost>
<organismHost>
    <name type="scientific">Sus scrofa</name>
    <name type="common">Pig</name>
    <dbReference type="NCBI Taxonomy" id="9823"/>
</organismHost>
<protein>
    <recommendedName>
        <fullName>Protein MGF 360-9L</fullName>
    </recommendedName>
</protein>
<evidence type="ECO:0000269" key="1">
    <source>
    </source>
</evidence>
<evidence type="ECO:0000269" key="2">
    <source>
    </source>
</evidence>
<evidence type="ECO:0000269" key="3">
    <source>
    </source>
</evidence>
<evidence type="ECO:0000305" key="4"/>
<name>3609L_ASFB7</name>